<name>XYLA_ARATH</name>
<keyword id="KW-0025">Alternative splicing</keyword>
<keyword id="KW-0119">Carbohydrate metabolism</keyword>
<keyword id="KW-0413">Isomerase</keyword>
<keyword id="KW-0460">Magnesium</keyword>
<keyword id="KW-0464">Manganese</keyword>
<keyword id="KW-0479">Metal-binding</keyword>
<keyword id="KW-1185">Reference proteome</keyword>
<keyword id="KW-0859">Xylose metabolism</keyword>
<sequence length="477" mass="53720">MKKVEFFMLLLCFIAASSLVSADPPTCPADLGGKCSDSDDWQGDFFPEIPKIKYEGPSSKNPLAYRWYNAEEEILGKKMKDWFRFSVAFWHTFRGTGGDPFGAATKYWPWEDGTNSVSMAKRRMRANFEFLKKLGVDWWCFHDRDIAPDGTTLEESNKNLDEVIELAKELQKGSKIKPLWGTAQLFLHPRYMHGGATSSEVGVYAYAAAQVKKAMEVTHYLGGENYVFWGGREGYQTLLNTDMGRELDHLARFFEAAVAYKKKIGFKGTLLIEPKPQEPTKHQYDWDAATAANFLRKYGLIDEFKLNIECNHATLSGHTCHHELETARINGLLGNIDANTGDAQTGWDTDQFLTDVGEATMVMMSVIKNGGIAPGGFNFDAKLRRESTDVEDLFIAHISGMDTMARGLRNAVKILEEGSLSELVRKRYATWDSELGKQIEEGKADFEYLEKKAKEFGEPKVSSAKQELAEMIFQSAM</sequence>
<protein>
    <recommendedName>
        <fullName>Xylose isomerase</fullName>
        <ecNumber>5.3.1.5</ecNumber>
    </recommendedName>
</protein>
<proteinExistence type="evidence at transcript level"/>
<dbReference type="EC" id="5.3.1.5"/>
<dbReference type="EMBL" id="AB011482">
    <property type="protein sequence ID" value="BAB08802.1"/>
    <property type="status" value="ALT_SEQ"/>
    <property type="molecule type" value="Genomic_DNA"/>
</dbReference>
<dbReference type="EMBL" id="CP002688">
    <property type="protein sequence ID" value="AED96932.1"/>
    <property type="molecule type" value="Genomic_DNA"/>
</dbReference>
<dbReference type="EMBL" id="AY136469">
    <property type="protein sequence ID" value="AAM97134.1"/>
    <property type="molecule type" value="mRNA"/>
</dbReference>
<dbReference type="EMBL" id="BT006607">
    <property type="protein sequence ID" value="AAP31951.1"/>
    <property type="molecule type" value="mRNA"/>
</dbReference>
<dbReference type="RefSeq" id="NP_568861.3">
    <molecule id="Q9FKK7-1"/>
    <property type="nucleotide sequence ID" value="NM_125147.5"/>
</dbReference>
<dbReference type="SMR" id="Q9FKK7"/>
<dbReference type="BioGRID" id="21115">
    <property type="interactions" value="5"/>
</dbReference>
<dbReference type="FunCoup" id="Q9FKK7">
    <property type="interactions" value="271"/>
</dbReference>
<dbReference type="STRING" id="3702.Q9FKK7"/>
<dbReference type="iPTMnet" id="Q9FKK7"/>
<dbReference type="PaxDb" id="3702-AT5G57655.2"/>
<dbReference type="ProteomicsDB" id="242513">
    <molecule id="Q9FKK7-1"/>
</dbReference>
<dbReference type="EnsemblPlants" id="AT5G57655.2">
    <molecule id="Q9FKK7-1"/>
    <property type="protein sequence ID" value="AT5G57655.2"/>
    <property type="gene ID" value="AT5G57655"/>
</dbReference>
<dbReference type="GeneID" id="835871"/>
<dbReference type="Gramene" id="AT5G57655.2">
    <molecule id="Q9FKK7-1"/>
    <property type="protein sequence ID" value="AT5G57655.2"/>
    <property type="gene ID" value="AT5G57655"/>
</dbReference>
<dbReference type="KEGG" id="ath:AT5G57655"/>
<dbReference type="Araport" id="AT5G57655"/>
<dbReference type="TAIR" id="AT5G57655"/>
<dbReference type="eggNOG" id="ENOG502QRMS">
    <property type="taxonomic scope" value="Eukaryota"/>
</dbReference>
<dbReference type="HOGENOM" id="CLU_037261_1_0_1"/>
<dbReference type="InParanoid" id="Q9FKK7"/>
<dbReference type="OMA" id="IAYWHTF"/>
<dbReference type="OrthoDB" id="1730074at2759"/>
<dbReference type="PhylomeDB" id="Q9FKK7"/>
<dbReference type="BioCyc" id="ARA:AT5G57655-MONOMER"/>
<dbReference type="PRO" id="PR:Q9FKK7"/>
<dbReference type="Proteomes" id="UP000006548">
    <property type="component" value="Chromosome 5"/>
</dbReference>
<dbReference type="ExpressionAtlas" id="Q9FKK7">
    <property type="expression patterns" value="baseline and differential"/>
</dbReference>
<dbReference type="GO" id="GO:0005783">
    <property type="term" value="C:endoplasmic reticulum"/>
    <property type="evidence" value="ECO:0007005"/>
    <property type="project" value="TAIR"/>
</dbReference>
<dbReference type="GO" id="GO:0005794">
    <property type="term" value="C:Golgi apparatus"/>
    <property type="evidence" value="ECO:0007005"/>
    <property type="project" value="TAIR"/>
</dbReference>
<dbReference type="GO" id="GO:0000325">
    <property type="term" value="C:plant-type vacuole"/>
    <property type="evidence" value="ECO:0007005"/>
    <property type="project" value="TAIR"/>
</dbReference>
<dbReference type="GO" id="GO:0009536">
    <property type="term" value="C:plastid"/>
    <property type="evidence" value="ECO:0007005"/>
    <property type="project" value="TAIR"/>
</dbReference>
<dbReference type="GO" id="GO:0099503">
    <property type="term" value="C:secretory vesicle"/>
    <property type="evidence" value="ECO:0007005"/>
    <property type="project" value="TAIR"/>
</dbReference>
<dbReference type="GO" id="GO:0046872">
    <property type="term" value="F:metal ion binding"/>
    <property type="evidence" value="ECO:0007669"/>
    <property type="project" value="UniProtKB-KW"/>
</dbReference>
<dbReference type="GO" id="GO:0009045">
    <property type="term" value="F:xylose isomerase activity"/>
    <property type="evidence" value="ECO:0007669"/>
    <property type="project" value="UniProtKB-EC"/>
</dbReference>
<dbReference type="GO" id="GO:0042732">
    <property type="term" value="P:D-xylose metabolic process"/>
    <property type="evidence" value="ECO:0007669"/>
    <property type="project" value="UniProtKB-KW"/>
</dbReference>
<dbReference type="FunFam" id="3.20.20.150:FF:000002">
    <property type="entry name" value="Xylose isomerase"/>
    <property type="match status" value="1"/>
</dbReference>
<dbReference type="Gene3D" id="3.20.20.150">
    <property type="entry name" value="Divalent-metal-dependent TIM barrel enzymes"/>
    <property type="match status" value="1"/>
</dbReference>
<dbReference type="HAMAP" id="MF_00455">
    <property type="entry name" value="Xylose_isom_A"/>
    <property type="match status" value="1"/>
</dbReference>
<dbReference type="InterPro" id="IPR036237">
    <property type="entry name" value="Xyl_isomerase-like_sf"/>
</dbReference>
<dbReference type="InterPro" id="IPR013022">
    <property type="entry name" value="Xyl_isomerase-like_TIM-brl"/>
</dbReference>
<dbReference type="InterPro" id="IPR013452">
    <property type="entry name" value="Xylose_isom_bac"/>
</dbReference>
<dbReference type="InterPro" id="IPR001998">
    <property type="entry name" value="Xylose_isomerase"/>
</dbReference>
<dbReference type="NCBIfam" id="NF003998">
    <property type="entry name" value="PRK05474.1"/>
    <property type="match status" value="1"/>
</dbReference>
<dbReference type="NCBIfam" id="TIGR02630">
    <property type="entry name" value="xylose_isom_A"/>
    <property type="match status" value="1"/>
</dbReference>
<dbReference type="PANTHER" id="PTHR48408">
    <property type="match status" value="1"/>
</dbReference>
<dbReference type="PANTHER" id="PTHR48408:SF1">
    <property type="entry name" value="XYLOSE ISOMERASE"/>
    <property type="match status" value="1"/>
</dbReference>
<dbReference type="Pfam" id="PF01261">
    <property type="entry name" value="AP_endonuc_2"/>
    <property type="match status" value="1"/>
</dbReference>
<dbReference type="PRINTS" id="PR00688">
    <property type="entry name" value="XYLOSISMRASE"/>
</dbReference>
<dbReference type="SUPFAM" id="SSF51658">
    <property type="entry name" value="Xylose isomerase-like"/>
    <property type="match status" value="1"/>
</dbReference>
<dbReference type="PROSITE" id="PS51415">
    <property type="entry name" value="XYLOSE_ISOMERASE"/>
    <property type="match status" value="1"/>
</dbReference>
<comment type="catalytic activity">
    <reaction>
        <text>alpha-D-xylose = alpha-D-xylulofuranose</text>
        <dbReference type="Rhea" id="RHEA:22816"/>
        <dbReference type="ChEBI" id="CHEBI:28518"/>
        <dbReference type="ChEBI" id="CHEBI:188998"/>
        <dbReference type="EC" id="5.3.1.5"/>
    </reaction>
</comment>
<comment type="cofactor">
    <cofactor evidence="1">
        <name>Mn(2+)</name>
        <dbReference type="ChEBI" id="CHEBI:29035"/>
    </cofactor>
    <text evidence="1">Binds 2 manganese ions per subunit.</text>
</comment>
<comment type="alternative products">
    <event type="alternative splicing"/>
    <isoform>
        <id>Q9FKK7-1</id>
        <name>1</name>
        <sequence type="displayed"/>
    </isoform>
    <text>A number of isoforms are produced. According to EST sequences.</text>
</comment>
<comment type="similarity">
    <text evidence="2">Belongs to the xylose isomerase family.</text>
</comment>
<comment type="sequence caution" evidence="2">
    <conflict type="erroneous gene model prediction">
        <sequence resource="EMBL-CDS" id="BAB08802"/>
    </conflict>
</comment>
<feature type="chain" id="PRO_0000195824" description="Xylose isomerase">
    <location>
        <begin position="1"/>
        <end position="477"/>
    </location>
</feature>
<feature type="active site" evidence="1">
    <location>
        <position position="142"/>
    </location>
</feature>
<feature type="binding site" evidence="1">
    <location>
        <position position="273"/>
    </location>
    <ligand>
        <name>Mn(2+)</name>
        <dbReference type="ChEBI" id="CHEBI:29035"/>
        <label>1</label>
    </ligand>
</feature>
<feature type="binding site" evidence="1">
    <location>
        <position position="309"/>
    </location>
    <ligand>
        <name>Mn(2+)</name>
        <dbReference type="ChEBI" id="CHEBI:29035"/>
        <label>1</label>
    </ligand>
</feature>
<feature type="binding site" evidence="1">
    <location>
        <position position="309"/>
    </location>
    <ligand>
        <name>Mn(2+)</name>
        <dbReference type="ChEBI" id="CHEBI:29035"/>
        <label>2</label>
    </ligand>
</feature>
<feature type="binding site" evidence="1">
    <location>
        <position position="312"/>
    </location>
    <ligand>
        <name>Mn(2+)</name>
        <dbReference type="ChEBI" id="CHEBI:29035"/>
        <label>2</label>
    </ligand>
</feature>
<feature type="binding site" evidence="1">
    <location>
        <position position="337"/>
    </location>
    <ligand>
        <name>Mn(2+)</name>
        <dbReference type="ChEBI" id="CHEBI:29035"/>
        <label>1</label>
    </ligand>
</feature>
<feature type="binding site" evidence="1">
    <location>
        <position position="348"/>
    </location>
    <ligand>
        <name>Mn(2+)</name>
        <dbReference type="ChEBI" id="CHEBI:29035"/>
        <label>2</label>
    </ligand>
</feature>
<feature type="binding site" evidence="1">
    <location>
        <position position="350"/>
    </location>
    <ligand>
        <name>Mn(2+)</name>
        <dbReference type="ChEBI" id="CHEBI:29035"/>
        <label>2</label>
    </ligand>
</feature>
<feature type="binding site" evidence="1">
    <location>
        <position position="380"/>
    </location>
    <ligand>
        <name>Mn(2+)</name>
        <dbReference type="ChEBI" id="CHEBI:29035"/>
        <label>1</label>
    </ligand>
</feature>
<evidence type="ECO:0000250" key="1"/>
<evidence type="ECO:0000305" key="2"/>
<accession>Q9FKK7</accession>
<accession>Q8L759</accession>
<reference key="1">
    <citation type="journal article" date="1998" name="DNA Res.">
        <title>Structural analysis of Arabidopsis thaliana chromosome 5. V. Sequence features of the regions of 1,381,565 bp covered by twenty one physically assigned P1 and TAC clones.</title>
        <authorList>
            <person name="Kaneko T."/>
            <person name="Kotani H."/>
            <person name="Nakamura Y."/>
            <person name="Sato S."/>
            <person name="Asamizu E."/>
            <person name="Miyajima N."/>
            <person name="Tabata S."/>
        </authorList>
    </citation>
    <scope>NUCLEOTIDE SEQUENCE [LARGE SCALE GENOMIC DNA]</scope>
    <source>
        <strain>cv. Columbia</strain>
    </source>
</reference>
<reference key="2">
    <citation type="journal article" date="2017" name="Plant J.">
        <title>Araport11: a complete reannotation of the Arabidopsis thaliana reference genome.</title>
        <authorList>
            <person name="Cheng C.Y."/>
            <person name="Krishnakumar V."/>
            <person name="Chan A.P."/>
            <person name="Thibaud-Nissen F."/>
            <person name="Schobel S."/>
            <person name="Town C.D."/>
        </authorList>
    </citation>
    <scope>GENOME REANNOTATION</scope>
    <source>
        <strain>cv. Columbia</strain>
    </source>
</reference>
<reference key="3">
    <citation type="journal article" date="2003" name="Science">
        <title>Empirical analysis of transcriptional activity in the Arabidopsis genome.</title>
        <authorList>
            <person name="Yamada K."/>
            <person name="Lim J."/>
            <person name="Dale J.M."/>
            <person name="Chen H."/>
            <person name="Shinn P."/>
            <person name="Palm C.J."/>
            <person name="Southwick A.M."/>
            <person name="Wu H.C."/>
            <person name="Kim C.J."/>
            <person name="Nguyen M."/>
            <person name="Pham P.K."/>
            <person name="Cheuk R.F."/>
            <person name="Karlin-Newmann G."/>
            <person name="Liu S.X."/>
            <person name="Lam B."/>
            <person name="Sakano H."/>
            <person name="Wu T."/>
            <person name="Yu G."/>
            <person name="Miranda M."/>
            <person name="Quach H.L."/>
            <person name="Tripp M."/>
            <person name="Chang C.H."/>
            <person name="Lee J.M."/>
            <person name="Toriumi M.J."/>
            <person name="Chan M.M."/>
            <person name="Tang C.C."/>
            <person name="Onodera C.S."/>
            <person name="Deng J.M."/>
            <person name="Akiyama K."/>
            <person name="Ansari Y."/>
            <person name="Arakawa T."/>
            <person name="Banh J."/>
            <person name="Banno F."/>
            <person name="Bowser L."/>
            <person name="Brooks S.Y."/>
            <person name="Carninci P."/>
            <person name="Chao Q."/>
            <person name="Choy N."/>
            <person name="Enju A."/>
            <person name="Goldsmith A.D."/>
            <person name="Gurjal M."/>
            <person name="Hansen N.F."/>
            <person name="Hayashizaki Y."/>
            <person name="Johnson-Hopson C."/>
            <person name="Hsuan V.W."/>
            <person name="Iida K."/>
            <person name="Karnes M."/>
            <person name="Khan S."/>
            <person name="Koesema E."/>
            <person name="Ishida J."/>
            <person name="Jiang P.X."/>
            <person name="Jones T."/>
            <person name="Kawai J."/>
            <person name="Kamiya A."/>
            <person name="Meyers C."/>
            <person name="Nakajima M."/>
            <person name="Narusaka M."/>
            <person name="Seki M."/>
            <person name="Sakurai T."/>
            <person name="Satou M."/>
            <person name="Tamse R."/>
            <person name="Vaysberg M."/>
            <person name="Wallender E.K."/>
            <person name="Wong C."/>
            <person name="Yamamura Y."/>
            <person name="Yuan S."/>
            <person name="Shinozaki K."/>
            <person name="Davis R.W."/>
            <person name="Theologis A."/>
            <person name="Ecker J.R."/>
        </authorList>
    </citation>
    <scope>NUCLEOTIDE SEQUENCE [LARGE SCALE MRNA]</scope>
    <source>
        <strain>cv. Columbia</strain>
    </source>
</reference>
<gene>
    <name type="primary">XYLA</name>
    <name type="ordered locus">At5g57655</name>
    <name type="ORF">MUA2.25</name>
</gene>
<organism>
    <name type="scientific">Arabidopsis thaliana</name>
    <name type="common">Mouse-ear cress</name>
    <dbReference type="NCBI Taxonomy" id="3702"/>
    <lineage>
        <taxon>Eukaryota</taxon>
        <taxon>Viridiplantae</taxon>
        <taxon>Streptophyta</taxon>
        <taxon>Embryophyta</taxon>
        <taxon>Tracheophyta</taxon>
        <taxon>Spermatophyta</taxon>
        <taxon>Magnoliopsida</taxon>
        <taxon>eudicotyledons</taxon>
        <taxon>Gunneridae</taxon>
        <taxon>Pentapetalae</taxon>
        <taxon>rosids</taxon>
        <taxon>malvids</taxon>
        <taxon>Brassicales</taxon>
        <taxon>Brassicaceae</taxon>
        <taxon>Camelineae</taxon>
        <taxon>Arabidopsis</taxon>
    </lineage>
</organism>